<sequence>MADLANEEKPAIAPPVFVFQKDKGQKRSAGGSSPEGGEDSDREYGNYCPPVKRERTSSLTQFPPSQSEERSSGFRLKPPTLIHGQAPSAGLPSQKPKEQQRSVLRPAVLQAPQPKALSQTVPSSGTNGVSLLADCTGAVPAASPDTVARRSPSEAADEVCALEEKEPQKNESSNASEEEACEKKGPATQQAFVFGQNLRDRVKLINESVDEADMENAGHPSADTPTATNYFLQYISSSLENSTNSADASSNKFVFGQNMSERVLSPPKLNEVSSDANRENAAVESGSESSSQEATPEKESLAESAAAYTKATARKCLLEKVEVITGEEAESNVLQMQCKLFVFDKTSQSWVERGRGLLRLNDMASTDDGTLQSRLVMRTQGSLRLILNTKLWAQMQIDKASEKSIRITAMDTEDQGVKVFLISASSKDTGQLYAALHHRILALRSRVEQEQEAKMPVPEPGAAPSNEEDDSDDDDVLAPSGATAAGAGDEGDGQTTGST</sequence>
<proteinExistence type="evidence at transcript level"/>
<feature type="initiator methionine" description="Removed" evidence="2">
    <location>
        <position position="1"/>
    </location>
</feature>
<feature type="chain" id="PRO_0000097166" description="Ran-binding protein 3">
    <location>
        <begin position="2"/>
        <end position="499"/>
    </location>
</feature>
<feature type="domain" description="RanBD1" evidence="3">
    <location>
        <begin position="310"/>
        <end position="450"/>
    </location>
</feature>
<feature type="region of interest" description="Disordered" evidence="4">
    <location>
        <begin position="1"/>
        <end position="128"/>
    </location>
</feature>
<feature type="region of interest" description="Disordered" evidence="4">
    <location>
        <begin position="141"/>
        <end position="196"/>
    </location>
</feature>
<feature type="region of interest" description="Disordered" evidence="4">
    <location>
        <begin position="264"/>
        <end position="303"/>
    </location>
</feature>
<feature type="region of interest" description="Disordered" evidence="4">
    <location>
        <begin position="447"/>
        <end position="499"/>
    </location>
</feature>
<feature type="short sequence motif" description="Nuclear localization signal" evidence="2">
    <location>
        <begin position="49"/>
        <end position="57"/>
    </location>
</feature>
<feature type="compositionally biased region" description="Basic and acidic residues" evidence="4">
    <location>
        <begin position="1"/>
        <end position="10"/>
    </location>
</feature>
<feature type="compositionally biased region" description="Polar residues" evidence="4">
    <location>
        <begin position="57"/>
        <end position="66"/>
    </location>
</feature>
<feature type="compositionally biased region" description="Polar residues" evidence="4">
    <location>
        <begin position="116"/>
        <end position="128"/>
    </location>
</feature>
<feature type="compositionally biased region" description="Acidic residues" evidence="4">
    <location>
        <begin position="466"/>
        <end position="476"/>
    </location>
</feature>
<feature type="compositionally biased region" description="Low complexity" evidence="4">
    <location>
        <begin position="481"/>
        <end position="499"/>
    </location>
</feature>
<feature type="modified residue" description="N-acetylalanine" evidence="2">
    <location>
        <position position="2"/>
    </location>
</feature>
<feature type="modified residue" description="N6-acetyllysine" evidence="1">
    <location>
        <position position="9"/>
    </location>
</feature>
<feature type="modified residue" description="N6-acetyllysine" evidence="2">
    <location>
        <position position="21"/>
    </location>
</feature>
<feature type="modified residue" description="Phosphoserine" evidence="2">
    <location>
        <position position="32"/>
    </location>
</feature>
<feature type="modified residue" description="Phosphoserine" evidence="2">
    <location>
        <position position="33"/>
    </location>
</feature>
<feature type="modified residue" description="Phosphoserine" evidence="2">
    <location>
        <position position="40"/>
    </location>
</feature>
<feature type="modified residue" description="Phosphothreonine" evidence="2">
    <location>
        <position position="56"/>
    </location>
</feature>
<feature type="modified residue" description="Phosphoserine" evidence="2">
    <location>
        <position position="58"/>
    </location>
</feature>
<feature type="modified residue" description="Phosphoserine" evidence="1">
    <location>
        <position position="151"/>
    </location>
</feature>
<feature type="modified residue" description="Phosphoserine" evidence="2">
    <location>
        <position position="265"/>
    </location>
</feature>
<feature type="modified residue" description="Phosphoserine" evidence="2">
    <location>
        <position position="285"/>
    </location>
</feature>
<feature type="modified residue" description="Phosphoserine" evidence="2">
    <location>
        <position position="287"/>
    </location>
</feature>
<feature type="modified residue" description="Phosphoserine" evidence="2">
    <location>
        <position position="304"/>
    </location>
</feature>
<feature type="modified residue" description="Phosphoserine" evidence="2">
    <location>
        <position position="471"/>
    </location>
</feature>
<accession>Q4R4T9</accession>
<evidence type="ECO:0000250" key="1">
    <source>
        <dbReference type="UniProtKB" id="Q9CT10"/>
    </source>
</evidence>
<evidence type="ECO:0000250" key="2">
    <source>
        <dbReference type="UniProtKB" id="Q9H6Z4"/>
    </source>
</evidence>
<evidence type="ECO:0000255" key="3">
    <source>
        <dbReference type="PROSITE-ProRule" id="PRU00164"/>
    </source>
</evidence>
<evidence type="ECO:0000256" key="4">
    <source>
        <dbReference type="SAM" id="MobiDB-lite"/>
    </source>
</evidence>
<reference key="1">
    <citation type="submission" date="2005-06" db="EMBL/GenBank/DDBJ databases">
        <title>DNA sequences of macaque genes expressed in brain or testis and its evolutionary implications.</title>
        <authorList>
            <consortium name="International consortium for macaque cDNA sequencing and analysis"/>
        </authorList>
    </citation>
    <scope>NUCLEOTIDE SEQUENCE [LARGE SCALE MRNA]</scope>
    <source>
        <tissue>Brain cortex</tissue>
    </source>
</reference>
<organism>
    <name type="scientific">Macaca fascicularis</name>
    <name type="common">Crab-eating macaque</name>
    <name type="synonym">Cynomolgus monkey</name>
    <dbReference type="NCBI Taxonomy" id="9541"/>
    <lineage>
        <taxon>Eukaryota</taxon>
        <taxon>Metazoa</taxon>
        <taxon>Chordata</taxon>
        <taxon>Craniata</taxon>
        <taxon>Vertebrata</taxon>
        <taxon>Euteleostomi</taxon>
        <taxon>Mammalia</taxon>
        <taxon>Eutheria</taxon>
        <taxon>Euarchontoglires</taxon>
        <taxon>Primates</taxon>
        <taxon>Haplorrhini</taxon>
        <taxon>Catarrhini</taxon>
        <taxon>Cercopithecidae</taxon>
        <taxon>Cercopithecinae</taxon>
        <taxon>Macaca</taxon>
    </lineage>
</organism>
<dbReference type="EMBL" id="AB169805">
    <property type="protein sequence ID" value="BAE01886.1"/>
    <property type="molecule type" value="mRNA"/>
</dbReference>
<dbReference type="SMR" id="Q4R4T9"/>
<dbReference type="STRING" id="9541.ENSMFAP00000017142"/>
<dbReference type="eggNOG" id="KOG0866">
    <property type="taxonomic scope" value="Eukaryota"/>
</dbReference>
<dbReference type="Proteomes" id="UP000233100">
    <property type="component" value="Unplaced"/>
</dbReference>
<dbReference type="GO" id="GO:0005737">
    <property type="term" value="C:cytoplasm"/>
    <property type="evidence" value="ECO:0007669"/>
    <property type="project" value="UniProtKB-SubCell"/>
</dbReference>
<dbReference type="GO" id="GO:0005634">
    <property type="term" value="C:nucleus"/>
    <property type="evidence" value="ECO:0007669"/>
    <property type="project" value="UniProtKB-SubCell"/>
</dbReference>
<dbReference type="GO" id="GO:0006611">
    <property type="term" value="P:protein export from nucleus"/>
    <property type="evidence" value="ECO:0007669"/>
    <property type="project" value="TreeGrafter"/>
</dbReference>
<dbReference type="CDD" id="cd13180">
    <property type="entry name" value="RanBD_RanBP3"/>
    <property type="match status" value="1"/>
</dbReference>
<dbReference type="FunFam" id="2.30.29.30:FF:000106">
    <property type="entry name" value="ran-binding protein 3 isoform X2"/>
    <property type="match status" value="1"/>
</dbReference>
<dbReference type="Gene3D" id="2.30.29.30">
    <property type="entry name" value="Pleckstrin-homology domain (PH domain)/Phosphotyrosine-binding domain (PTB)"/>
    <property type="match status" value="1"/>
</dbReference>
<dbReference type="InterPro" id="IPR011993">
    <property type="entry name" value="PH-like_dom_sf"/>
</dbReference>
<dbReference type="InterPro" id="IPR000156">
    <property type="entry name" value="Ran_bind_dom"/>
</dbReference>
<dbReference type="InterPro" id="IPR045255">
    <property type="entry name" value="RanBP1-like"/>
</dbReference>
<dbReference type="PANTHER" id="PTHR23138">
    <property type="entry name" value="RAN BINDING PROTEIN"/>
    <property type="match status" value="1"/>
</dbReference>
<dbReference type="PANTHER" id="PTHR23138:SF91">
    <property type="entry name" value="RAN-BINDING PROTEIN 3"/>
    <property type="match status" value="1"/>
</dbReference>
<dbReference type="Pfam" id="PF00638">
    <property type="entry name" value="Ran_BP1"/>
    <property type="match status" value="1"/>
</dbReference>
<dbReference type="SMART" id="SM00160">
    <property type="entry name" value="RanBD"/>
    <property type="match status" value="1"/>
</dbReference>
<dbReference type="SUPFAM" id="SSF50729">
    <property type="entry name" value="PH domain-like"/>
    <property type="match status" value="1"/>
</dbReference>
<dbReference type="PROSITE" id="PS50196">
    <property type="entry name" value="RANBD1"/>
    <property type="match status" value="1"/>
</dbReference>
<name>RANB3_MACFA</name>
<gene>
    <name type="primary">RANBP3</name>
    <name type="ORF">QccE-19613</name>
</gene>
<comment type="function">
    <text evidence="2">Acts as a cofactor for XPO1/CRM1-mediated nuclear export, perhaps as export complex scaffolding protein. Bound to XPO1/CRM1, stabilizes the XPO1/CRM1-cargo interaction. In the absence of Ran-bound GTP prevents binding of XPO1/CRM1 to the nuclear pore complex. Binds to CHC1/RCC1 and increases the guanine nucleotide exchange activity of CHC1/RCC1. Recruits XPO1/CRM1 to CHC1/RCC1 in a Ran-dependent manner. Negative regulator of TGF-beta signaling through interaction with the R-SMAD proteins, SMAD2 and SMAD3, and mediating their nuclear export.</text>
</comment>
<comment type="subunit">
    <text evidence="2">Interacts with CHC1 in a Ran-stimulated manner. Interacts with XPO1. Interacts (via its C-terminal R domain) with SMAD2 (dephosphorylated form via its MH1 and MH2 domains); the interaction results in the nuclear export of SMAD2 and termination of the TGF-beta signaling. Interacts (via its C-terminal R domain) with SMAD3 (dephosphorylated form via its MH1 domain); the interaction results in the nuclear export of SMAD3 and termination of the TGF-beta signaling.</text>
</comment>
<comment type="subcellular location">
    <subcellularLocation>
        <location evidence="2">Cytoplasm</location>
    </subcellularLocation>
    <subcellularLocation>
        <location evidence="2">Nucleus</location>
    </subcellularLocation>
    <text evidence="2">Nuclear import is promoted by phosphorylation at Ser-58 and is dependent on KPNA4.</text>
</comment>
<comment type="PTM">
    <text evidence="2">Phosphorylation at Ser-58 promotes its import into the nucleus.</text>
</comment>
<keyword id="KW-0007">Acetylation</keyword>
<keyword id="KW-0963">Cytoplasm</keyword>
<keyword id="KW-0539">Nucleus</keyword>
<keyword id="KW-0597">Phosphoprotein</keyword>
<keyword id="KW-0653">Protein transport</keyword>
<keyword id="KW-1185">Reference proteome</keyword>
<keyword id="KW-0813">Transport</keyword>
<protein>
    <recommendedName>
        <fullName>Ran-binding protein 3</fullName>
        <shortName>RanBP3</shortName>
    </recommendedName>
</protein>